<name>PABP_MYCMD</name>
<comment type="function">
    <text evidence="5 6 7 9">RNA-binding protein involved in the formation of polar-growing hyphae which is essential for infection by the plant pathogen (PubMed:15643068). Component of endosomal mRNA transport that regulates polarity of the infectious hyphae by transporting a broad spectrum of cargo mRNAs from the nucleus to cell poles (PubMed:19494833, PubMed:25985087, PubMed:31338952).</text>
</comment>
<comment type="subunit">
    <text evidence="7 9">Part of large ribonucleoprotein complexes (mRNPs) containing RNA-binding proteins RRM4 and PAB1, endosome-binding protein UPA1, core scaffold protein UPA2 and associated factor GRP1 (PubMed:25985087, PubMed:31338952). Interacts (via PABC domain) with UPA1 (via PAM2 domain) (PubMed:25985087). Interacts (via PABC domain) with UPA2 (via PAM2 domains) (PubMed:31338952).</text>
</comment>
<comment type="subcellular location">
    <subcellularLocation>
        <location evidence="6 7 8">Cytoplasm</location>
        <location evidence="6 7 8">Cytoskeleton</location>
    </subcellularLocation>
    <subcellularLocation>
        <location evidence="6 7 9">Endosome</location>
    </subcellularLocation>
    <subcellularLocation>
        <location evidence="9">Cytoplasm</location>
    </subcellularLocation>
    <text evidence="6 7 8 9">Shuttles with endosomes along microtubules.</text>
</comment>
<comment type="domain">
    <text evidence="7 9">The C-terminal PABC domain is involved in the interaction with UPA1 and UPA2.</text>
</comment>
<comment type="similarity">
    <text evidence="12">Belongs to the polyadenylate-binding protein type-1 family.</text>
</comment>
<sequence>MSSTESPVPAAAAPAEAVPASTPAPAAEQPAVGNGEQRNNADAANNTSLYVGELDPSVTEAMLFEIFSMIGTVASIRVCRDAVTRRSLGYAYVNFLNAADGERAMEQLNYSLIRNRPCRIMWSQRDPALRRTGQGNIFIKNLDAGIDNKALHDTFAAFGNILSCKVATNETGSLGYGFVHYETAEAAEAAIKHVNGMLLNDKKVYVGHHIPRKERQAKIEETRANFTNVYAKNVDPEVTDDEFEKLFTKFGKITSCVLQRDEDGKSKGFGFVNFEDHNEAQKAVDELHDSDFKGQKLFVARAQKKSEREEELRRSYEAAKNEKLAKFQGVNLYLKNIPESYDDERLREEFAPFGAITSCKIMRAPSGVSRGFGFVCYSAPEEANKAVSEMNGKMLDNRPLYVALAQRKDVRRQQLEAQIMQRNQLRLQQQAAAQGMGYPGPGMYYPQPGAFPGQPGGMVPRPRYAPAGMMPQGMPMAPYGQPGQFPAGMMPQGYRPARPPRGAPNAAGGPAPPAGARPPTGVNGAPRPAGQPVPGQPMPRGPAARPAGRPEADQPGALTAAALAKASPEEQKQMLGEAIYPKVAASQPELAGKLTGMILELPVTELLHLLEESEALDAKVNEALEVLKEYQQNDSAGAEAEANAEAPKTEA</sequence>
<evidence type="ECO:0000250" key="1">
    <source>
        <dbReference type="UniProtKB" id="P04147"/>
    </source>
</evidence>
<evidence type="ECO:0000255" key="2">
    <source>
        <dbReference type="PROSITE-ProRule" id="PRU00176"/>
    </source>
</evidence>
<evidence type="ECO:0000255" key="3">
    <source>
        <dbReference type="PROSITE-ProRule" id="PRU00641"/>
    </source>
</evidence>
<evidence type="ECO:0000256" key="4">
    <source>
        <dbReference type="SAM" id="MobiDB-lite"/>
    </source>
</evidence>
<evidence type="ECO:0000269" key="5">
    <source>
    </source>
</evidence>
<evidence type="ECO:0000269" key="6">
    <source>
    </source>
</evidence>
<evidence type="ECO:0000269" key="7">
    <source>
    </source>
</evidence>
<evidence type="ECO:0000269" key="8">
    <source>
    </source>
</evidence>
<evidence type="ECO:0000269" key="9">
    <source>
    </source>
</evidence>
<evidence type="ECO:0000303" key="10">
    <source>
    </source>
</evidence>
<evidence type="ECO:0000303" key="11">
    <source>
    </source>
</evidence>
<evidence type="ECO:0000305" key="12"/>
<evidence type="ECO:0007829" key="13">
    <source>
        <dbReference type="PDB" id="8S6U"/>
    </source>
</evidence>
<feature type="chain" id="PRO_0000295400" description="Polyadenylate-binding protein 1">
    <location>
        <begin position="1"/>
        <end position="651"/>
    </location>
</feature>
<feature type="domain" description="RRM 1" evidence="2">
    <location>
        <begin position="47"/>
        <end position="125"/>
    </location>
</feature>
<feature type="domain" description="RRM 2" evidence="2">
    <location>
        <begin position="135"/>
        <end position="211"/>
    </location>
</feature>
<feature type="domain" description="RRM 3" evidence="2">
    <location>
        <begin position="227"/>
        <end position="304"/>
    </location>
</feature>
<feature type="domain" description="RRM 4" evidence="2">
    <location>
        <begin position="330"/>
        <end position="407"/>
    </location>
</feature>
<feature type="domain" description="PABC" evidence="3">
    <location>
        <begin position="555"/>
        <end position="632"/>
    </location>
</feature>
<feature type="region of interest" description="Disordered" evidence="4">
    <location>
        <begin position="1"/>
        <end position="42"/>
    </location>
</feature>
<feature type="region of interest" description="Disordered" evidence="4">
    <location>
        <begin position="481"/>
        <end position="554"/>
    </location>
</feature>
<feature type="region of interest" description="Disordered" evidence="4">
    <location>
        <begin position="632"/>
        <end position="651"/>
    </location>
</feature>
<feature type="compositionally biased region" description="Low complexity" evidence="4">
    <location>
        <begin position="1"/>
        <end position="27"/>
    </location>
</feature>
<feature type="compositionally biased region" description="Pro residues" evidence="4">
    <location>
        <begin position="529"/>
        <end position="540"/>
    </location>
</feature>
<feature type="compositionally biased region" description="Low complexity" evidence="4">
    <location>
        <begin position="636"/>
        <end position="651"/>
    </location>
</feature>
<feature type="helix" evidence="13">
    <location>
        <begin position="568"/>
        <end position="584"/>
    </location>
</feature>
<feature type="turn" evidence="13">
    <location>
        <begin position="588"/>
        <end position="590"/>
    </location>
</feature>
<feature type="helix" evidence="13">
    <location>
        <begin position="591"/>
        <end position="598"/>
    </location>
</feature>
<feature type="helix" evidence="13">
    <location>
        <begin position="603"/>
        <end position="611"/>
    </location>
</feature>
<feature type="helix" evidence="13">
    <location>
        <begin position="613"/>
        <end position="631"/>
    </location>
</feature>
<proteinExistence type="evidence at protein level"/>
<dbReference type="EMBL" id="CM003148">
    <property type="protein sequence ID" value="KIS68403.1"/>
    <property type="molecule type" value="Genomic_DNA"/>
</dbReference>
<dbReference type="RefSeq" id="XP_011389943.1">
    <property type="nucleotide sequence ID" value="XM_011391641.1"/>
</dbReference>
<dbReference type="PDB" id="8S6U">
    <property type="method" value="X-ray"/>
    <property type="resolution" value="2.00 A"/>
    <property type="chains" value="A/Q=567-633"/>
</dbReference>
<dbReference type="PDBsum" id="8S6U"/>
<dbReference type="SMR" id="Q4P8R9"/>
<dbReference type="FunCoup" id="Q4P8R9">
    <property type="interactions" value="369"/>
</dbReference>
<dbReference type="IntAct" id="Q4P8R9">
    <property type="interactions" value="1"/>
</dbReference>
<dbReference type="MINT" id="Q4P8R9"/>
<dbReference type="STRING" id="237631.Q4P8R9"/>
<dbReference type="EnsemblFungi" id="KIS68403">
    <property type="protein sequence ID" value="KIS68403"/>
    <property type="gene ID" value="UMAG_03494"/>
</dbReference>
<dbReference type="GeneID" id="23563930"/>
<dbReference type="KEGG" id="uma:UMAG_03494"/>
<dbReference type="VEuPathDB" id="FungiDB:UMAG_03494"/>
<dbReference type="eggNOG" id="KOG0123">
    <property type="taxonomic scope" value="Eukaryota"/>
</dbReference>
<dbReference type="HOGENOM" id="CLU_012062_22_4_1"/>
<dbReference type="InParanoid" id="Q4P8R9"/>
<dbReference type="OMA" id="QQPGFMP"/>
<dbReference type="OrthoDB" id="19742at2759"/>
<dbReference type="Proteomes" id="UP000000561">
    <property type="component" value="Chromosome 9"/>
</dbReference>
<dbReference type="GO" id="GO:0010494">
    <property type="term" value="C:cytoplasmic stress granule"/>
    <property type="evidence" value="ECO:0000318"/>
    <property type="project" value="GO_Central"/>
</dbReference>
<dbReference type="GO" id="GO:0005856">
    <property type="term" value="C:cytoskeleton"/>
    <property type="evidence" value="ECO:0007669"/>
    <property type="project" value="UniProtKB-SubCell"/>
</dbReference>
<dbReference type="GO" id="GO:0005829">
    <property type="term" value="C:cytosol"/>
    <property type="evidence" value="ECO:0000318"/>
    <property type="project" value="GO_Central"/>
</dbReference>
<dbReference type="GO" id="GO:0005768">
    <property type="term" value="C:endosome"/>
    <property type="evidence" value="ECO:0007669"/>
    <property type="project" value="UniProtKB-SubCell"/>
</dbReference>
<dbReference type="GO" id="GO:0005634">
    <property type="term" value="C:nucleus"/>
    <property type="evidence" value="ECO:0000318"/>
    <property type="project" value="GO_Central"/>
</dbReference>
<dbReference type="GO" id="GO:1990904">
    <property type="term" value="C:ribonucleoprotein complex"/>
    <property type="evidence" value="ECO:0000318"/>
    <property type="project" value="GO_Central"/>
</dbReference>
<dbReference type="GO" id="GO:0003730">
    <property type="term" value="F:mRNA 3'-UTR binding"/>
    <property type="evidence" value="ECO:0000318"/>
    <property type="project" value="GO_Central"/>
</dbReference>
<dbReference type="GO" id="GO:0008143">
    <property type="term" value="F:poly(A) binding"/>
    <property type="evidence" value="ECO:0000318"/>
    <property type="project" value="GO_Central"/>
</dbReference>
<dbReference type="GO" id="GO:0008266">
    <property type="term" value="F:poly(U) RNA binding"/>
    <property type="evidence" value="ECO:0000318"/>
    <property type="project" value="GO_Central"/>
</dbReference>
<dbReference type="GO" id="GO:0051028">
    <property type="term" value="P:mRNA transport"/>
    <property type="evidence" value="ECO:0007669"/>
    <property type="project" value="UniProtKB-KW"/>
</dbReference>
<dbReference type="GO" id="GO:0006417">
    <property type="term" value="P:regulation of translation"/>
    <property type="evidence" value="ECO:0007669"/>
    <property type="project" value="UniProtKB-KW"/>
</dbReference>
<dbReference type="CDD" id="cd12378">
    <property type="entry name" value="RRM1_I_PABPs"/>
    <property type="match status" value="1"/>
</dbReference>
<dbReference type="CDD" id="cd12379">
    <property type="entry name" value="RRM2_I_PABPs"/>
    <property type="match status" value="1"/>
</dbReference>
<dbReference type="CDD" id="cd12380">
    <property type="entry name" value="RRM3_I_PABPs"/>
    <property type="match status" value="1"/>
</dbReference>
<dbReference type="CDD" id="cd12381">
    <property type="entry name" value="RRM4_I_PABPs"/>
    <property type="match status" value="1"/>
</dbReference>
<dbReference type="FunFam" id="1.10.1900.10:FF:000011">
    <property type="entry name" value="Polyadenylate-binding protein"/>
    <property type="match status" value="1"/>
</dbReference>
<dbReference type="FunFam" id="3.30.70.330:FF:000003">
    <property type="entry name" value="Polyadenylate-binding protein"/>
    <property type="match status" value="1"/>
</dbReference>
<dbReference type="FunFam" id="3.30.70.330:FF:000441">
    <property type="entry name" value="Polyadenylate-binding protein"/>
    <property type="match status" value="1"/>
</dbReference>
<dbReference type="FunFam" id="3.30.70.330:FF:000648">
    <property type="entry name" value="Polyadenylate-binding protein"/>
    <property type="match status" value="1"/>
</dbReference>
<dbReference type="FunFam" id="3.30.70.330:FF:000590">
    <property type="entry name" value="Polyadenylate-binding protein 5"/>
    <property type="match status" value="1"/>
</dbReference>
<dbReference type="Gene3D" id="3.30.70.330">
    <property type="match status" value="4"/>
</dbReference>
<dbReference type="Gene3D" id="1.10.1900.10">
    <property type="entry name" value="c-terminal domain of poly(a) binding protein"/>
    <property type="match status" value="1"/>
</dbReference>
<dbReference type="InterPro" id="IPR012677">
    <property type="entry name" value="Nucleotide-bd_a/b_plait_sf"/>
</dbReference>
<dbReference type="InterPro" id="IPR036053">
    <property type="entry name" value="PABP-dom"/>
</dbReference>
<dbReference type="InterPro" id="IPR006515">
    <property type="entry name" value="PABP_1234"/>
</dbReference>
<dbReference type="InterPro" id="IPR002004">
    <property type="entry name" value="PABP_HYD_C"/>
</dbReference>
<dbReference type="InterPro" id="IPR034364">
    <property type="entry name" value="PABP_RRM1"/>
</dbReference>
<dbReference type="InterPro" id="IPR035979">
    <property type="entry name" value="RBD_domain_sf"/>
</dbReference>
<dbReference type="InterPro" id="IPR045305">
    <property type="entry name" value="RRM2_I_PABPs"/>
</dbReference>
<dbReference type="InterPro" id="IPR000504">
    <property type="entry name" value="RRM_dom"/>
</dbReference>
<dbReference type="InterPro" id="IPR003954">
    <property type="entry name" value="RRM_dom_euk"/>
</dbReference>
<dbReference type="NCBIfam" id="TIGR01628">
    <property type="entry name" value="PABP-1234"/>
    <property type="match status" value="1"/>
</dbReference>
<dbReference type="PANTHER" id="PTHR24012">
    <property type="entry name" value="RNA BINDING PROTEIN"/>
    <property type="match status" value="1"/>
</dbReference>
<dbReference type="Pfam" id="PF00658">
    <property type="entry name" value="MLLE"/>
    <property type="match status" value="1"/>
</dbReference>
<dbReference type="Pfam" id="PF00076">
    <property type="entry name" value="RRM_1"/>
    <property type="match status" value="4"/>
</dbReference>
<dbReference type="SMART" id="SM00517">
    <property type="entry name" value="PolyA"/>
    <property type="match status" value="1"/>
</dbReference>
<dbReference type="SMART" id="SM00360">
    <property type="entry name" value="RRM"/>
    <property type="match status" value="4"/>
</dbReference>
<dbReference type="SMART" id="SM00361">
    <property type="entry name" value="RRM_1"/>
    <property type="match status" value="4"/>
</dbReference>
<dbReference type="SUPFAM" id="SSF63570">
    <property type="entry name" value="PABC (PABP) domain"/>
    <property type="match status" value="1"/>
</dbReference>
<dbReference type="SUPFAM" id="SSF54928">
    <property type="entry name" value="RNA-binding domain, RBD"/>
    <property type="match status" value="2"/>
</dbReference>
<dbReference type="PROSITE" id="PS51309">
    <property type="entry name" value="PABC"/>
    <property type="match status" value="1"/>
</dbReference>
<dbReference type="PROSITE" id="PS50102">
    <property type="entry name" value="RRM"/>
    <property type="match status" value="4"/>
</dbReference>
<organism>
    <name type="scientific">Mycosarcoma maydis</name>
    <name type="common">Corn smut fungus</name>
    <name type="synonym">Ustilago maydis</name>
    <dbReference type="NCBI Taxonomy" id="5270"/>
    <lineage>
        <taxon>Eukaryota</taxon>
        <taxon>Fungi</taxon>
        <taxon>Dikarya</taxon>
        <taxon>Basidiomycota</taxon>
        <taxon>Ustilaginomycotina</taxon>
        <taxon>Ustilaginomycetes</taxon>
        <taxon>Ustilaginales</taxon>
        <taxon>Ustilaginaceae</taxon>
        <taxon>Mycosarcoma</taxon>
    </lineage>
</organism>
<gene>
    <name evidence="11" type="primary">PAB1</name>
    <name evidence="10" type="synonym">RRM12</name>
    <name type="ORF">UMAG_03494</name>
</gene>
<protein>
    <recommendedName>
        <fullName evidence="11">Polyadenylate-binding protein 1</fullName>
        <shortName evidence="1">PABP</shortName>
    </recommendedName>
    <alternativeName>
        <fullName evidence="10">RNA-binding protein RRM12</fullName>
    </alternativeName>
</protein>
<reference key="1">
    <citation type="journal article" date="2006" name="Nature">
        <title>Insights from the genome of the biotrophic fungal plant pathogen Ustilago maydis.</title>
        <authorList>
            <person name="Kaemper J."/>
            <person name="Kahmann R."/>
            <person name="Boelker M."/>
            <person name="Ma L.-J."/>
            <person name="Brefort T."/>
            <person name="Saville B.J."/>
            <person name="Banuett F."/>
            <person name="Kronstad J.W."/>
            <person name="Gold S.E."/>
            <person name="Mueller O."/>
            <person name="Perlin M.H."/>
            <person name="Woesten H.A.B."/>
            <person name="de Vries R."/>
            <person name="Ruiz-Herrera J."/>
            <person name="Reynaga-Pena C.G."/>
            <person name="Snetselaar K."/>
            <person name="McCann M."/>
            <person name="Perez-Martin J."/>
            <person name="Feldbruegge M."/>
            <person name="Basse C.W."/>
            <person name="Steinberg G."/>
            <person name="Ibeas J.I."/>
            <person name="Holloman W."/>
            <person name="Guzman P."/>
            <person name="Farman M.L."/>
            <person name="Stajich J.E."/>
            <person name="Sentandreu R."/>
            <person name="Gonzalez-Prieto J.M."/>
            <person name="Kennell J.C."/>
            <person name="Molina L."/>
            <person name="Schirawski J."/>
            <person name="Mendoza-Mendoza A."/>
            <person name="Greilinger D."/>
            <person name="Muench K."/>
            <person name="Roessel N."/>
            <person name="Scherer M."/>
            <person name="Vranes M."/>
            <person name="Ladendorf O."/>
            <person name="Vincon V."/>
            <person name="Fuchs U."/>
            <person name="Sandrock B."/>
            <person name="Meng S."/>
            <person name="Ho E.C.H."/>
            <person name="Cahill M.J."/>
            <person name="Boyce K.J."/>
            <person name="Klose J."/>
            <person name="Klosterman S.J."/>
            <person name="Deelstra H.J."/>
            <person name="Ortiz-Castellanos L."/>
            <person name="Li W."/>
            <person name="Sanchez-Alonso P."/>
            <person name="Schreier P.H."/>
            <person name="Haeuser-Hahn I."/>
            <person name="Vaupel M."/>
            <person name="Koopmann E."/>
            <person name="Friedrich G."/>
            <person name="Voss H."/>
            <person name="Schlueter T."/>
            <person name="Margolis J."/>
            <person name="Platt D."/>
            <person name="Swimmer C."/>
            <person name="Gnirke A."/>
            <person name="Chen F."/>
            <person name="Vysotskaia V."/>
            <person name="Mannhaupt G."/>
            <person name="Gueldener U."/>
            <person name="Muensterkoetter M."/>
            <person name="Haase D."/>
            <person name="Oesterheld M."/>
            <person name="Mewes H.-W."/>
            <person name="Mauceli E.W."/>
            <person name="DeCaprio D."/>
            <person name="Wade C.M."/>
            <person name="Butler J."/>
            <person name="Young S.K."/>
            <person name="Jaffe D.B."/>
            <person name="Calvo S.E."/>
            <person name="Nusbaum C."/>
            <person name="Galagan J.E."/>
            <person name="Birren B.W."/>
        </authorList>
    </citation>
    <scope>NUCLEOTIDE SEQUENCE [LARGE SCALE GENOMIC DNA]</scope>
    <source>
        <strain>DSM 14603 / FGSC 9021 / UM521</strain>
    </source>
</reference>
<reference key="2">
    <citation type="submission" date="2014-09" db="EMBL/GenBank/DDBJ databases">
        <authorList>
            <person name="Gueldener U."/>
            <person name="Muensterkoetter M."/>
            <person name="Walter M.C."/>
            <person name="Mannhaupt G."/>
            <person name="Kahmann R."/>
        </authorList>
    </citation>
    <scope>GENOME REANNOTATION</scope>
    <source>
        <strain>DSM 14603 / FGSC 9021 / UM521</strain>
    </source>
</reference>
<reference key="3">
    <citation type="journal article" date="2005" name="Eukaryot. Cell">
        <title>Role for RNA-binding proteins implicated in pathogenic development of Ustilago maydis.</title>
        <authorList>
            <person name="Becht P."/>
            <person name="Vollmeister E."/>
            <person name="Feldbruegge M."/>
        </authorList>
    </citation>
    <scope>FUNCTION</scope>
</reference>
<reference key="4">
    <citation type="journal article" date="2009" name="EMBO J.">
        <title>The fungal RNA-binding protein Rrm4 mediates long-distance transport of ubi1 and rho3 mRNAs.</title>
        <authorList>
            <person name="Koenig J."/>
            <person name="Baumann S."/>
            <person name="Koepke J."/>
            <person name="Pohlmann T."/>
            <person name="Zarnack K."/>
            <person name="Feldbruegge M."/>
        </authorList>
    </citation>
    <scope>FUNCTION</scope>
    <scope>SUBCELLULAR LOCATION</scope>
</reference>
<reference key="5">
    <citation type="journal article" date="2015" name="Elife">
        <title>A FYVE zinc finger domain protein specifically links mRNA transport to endosome trafficking.</title>
        <authorList>
            <person name="Pohlmann T."/>
            <person name="Baumann S."/>
            <person name="Haag C."/>
            <person name="Albrecht M."/>
            <person name="Feldbruegge M."/>
        </authorList>
    </citation>
    <scope>FUNCTION</scope>
    <scope>DOMAIN</scope>
    <scope>SUBUNIT</scope>
    <scope>INTERACTION WITH UPA1</scope>
    <scope>SUBCELLULAR LOCATION</scope>
</reference>
<reference key="6">
    <citation type="journal article" date="2017" name="PLoS Genet.">
        <title>The ESCRT regulator Did2 maintains the balance between long-distance endosomal transport and endocytic trafficking.</title>
        <authorList>
            <person name="Haag C."/>
            <person name="Pohlmann T."/>
            <person name="Feldbruegge M."/>
        </authorList>
    </citation>
    <scope>SUBCELLULAR LOCATION</scope>
</reference>
<reference key="7">
    <citation type="journal article" date="2019" name="EMBO Rep.">
        <title>The multi PAM2 protein Upa2 functions as novel core component of endosomal mRNA transport.</title>
        <authorList>
            <person name="Jankowski S."/>
            <person name="Pohlmann T."/>
            <person name="Baumann S."/>
            <person name="Muentjes K."/>
            <person name="Devan S.K."/>
            <person name="Zander S."/>
            <person name="Feldbruegge M."/>
        </authorList>
    </citation>
    <scope>FUNCTION</scope>
    <scope>DOMAIN</scope>
    <scope>SUBUNIT</scope>
    <scope>INTERACTION WITH UPA2</scope>
    <scope>SUBCELLULAR LOCATION</scope>
</reference>
<accession>Q4P8R9</accession>
<accession>A0A0D1CP36</accession>
<keyword id="KW-0002">3D-structure</keyword>
<keyword id="KW-0963">Cytoplasm</keyword>
<keyword id="KW-0206">Cytoskeleton</keyword>
<keyword id="KW-0967">Endosome</keyword>
<keyword id="KW-0509">mRNA transport</keyword>
<keyword id="KW-1185">Reference proteome</keyword>
<keyword id="KW-0677">Repeat</keyword>
<keyword id="KW-0694">RNA-binding</keyword>
<keyword id="KW-0810">Translation regulation</keyword>
<keyword id="KW-0813">Transport</keyword>